<keyword id="KW-0012">Acyltransferase</keyword>
<keyword id="KW-0325">Glycoprotein</keyword>
<keyword id="KW-0732">Signal</keyword>
<keyword id="KW-0808">Transferase</keyword>
<comment type="function">
    <text evidence="3">Acetyltransferase; part of the gene cluster that mediates the biosynthesis of an ophiobolin family sesterterpenoid.</text>
</comment>
<comment type="function">
    <text evidence="3">Sesterterpenoid synthase; part of the gene cluster that mediates the biosynthesis of an ophiobolin family sesterterpenoid.</text>
</comment>
<comment type="pathway">
    <text evidence="6">Secondary metabolite biosynthesis; terpenoid biosynthesis.</text>
</comment>
<comment type="similarity">
    <text evidence="5">Belongs to the bfoA family.</text>
</comment>
<name>STTC_ASPTE</name>
<protein>
    <recommendedName>
        <fullName evidence="4">Ophiobolin family sesterterpenoid biosynthesis cluster acetyltransferase</fullName>
        <ecNumber evidence="6">2.3.1.-</ecNumber>
    </recommendedName>
</protein>
<reference key="1">
    <citation type="journal article" date="2017" name="Nat. Chem. Biol.">
        <title>A scalable platform to identify fungal secondary metabolites and their gene clusters.</title>
        <authorList>
            <person name="Clevenger K.D."/>
            <person name="Bok J.W."/>
            <person name="Ye R."/>
            <person name="Miley G.P."/>
            <person name="Verdan M.H."/>
            <person name="Velk T."/>
            <person name="Chen C."/>
            <person name="Yang K."/>
            <person name="Robey M.T."/>
            <person name="Gao P."/>
            <person name="Lamprecht M."/>
            <person name="Thomas P.M."/>
            <person name="Islam M.N."/>
            <person name="Palmer J.M."/>
            <person name="Wu C.C."/>
            <person name="Keller N.P."/>
            <person name="Kelleher N.L."/>
        </authorList>
    </citation>
    <scope>NUCLEOTIDE SEQUENCE [GENOMIC DNA]</scope>
    <scope>FUNCTION</scope>
    <scope>PATHWAY</scope>
    <source>
        <strain>ATCC 20542 / MF4845</strain>
    </source>
</reference>
<sequence>MYFFRALLSPVVLWPALVSGKSNSNTANYTVEELWDLEVTFWDNFLYPANVKQVEAINSTLFTTEVQGRVDITRVFNGSELNTEYIFGLFSDPNHLSLVGVPIAYSITQFIAERNIASATTVVTFNATSFGNLLLPVTIDTWIMWDANGRIMQYDATFRWFGFLLDTLVEALATSINGTASQATAALTQLLATTVCDTHDKYCTGENQQYDNSTACYDFLTTAIPLGKDYELGRDTLLCREVHEHMVQYDPKMHCPHIGPTGGDYCVNDQTYEQKVLQKYFNVSWIVGVPWTGNIWLGD</sequence>
<feature type="signal peptide" evidence="1">
    <location>
        <begin position="1"/>
        <end position="20"/>
    </location>
</feature>
<feature type="chain" id="PRO_0000450610" description="Ophiobolin family sesterterpenoid biosynthesis cluster acetyltransferase">
    <location>
        <begin position="21"/>
        <end position="299"/>
    </location>
</feature>
<feature type="glycosylation site" description="N-linked (GlcNAc...) asparagine" evidence="2">
    <location>
        <position position="28"/>
    </location>
</feature>
<feature type="glycosylation site" description="N-linked (GlcNAc...) asparagine" evidence="2">
    <location>
        <position position="58"/>
    </location>
</feature>
<feature type="glycosylation site" description="N-linked (GlcNAc...) asparagine" evidence="2">
    <location>
        <position position="77"/>
    </location>
</feature>
<feature type="glycosylation site" description="N-linked (GlcNAc...) asparagine" evidence="2">
    <location>
        <position position="126"/>
    </location>
</feature>
<feature type="glycosylation site" description="N-linked (GlcNAc...) asparagine" evidence="2">
    <location>
        <position position="177"/>
    </location>
</feature>
<feature type="glycosylation site" description="N-linked (GlcNAc...) asparagine" evidence="2">
    <location>
        <position position="212"/>
    </location>
</feature>
<feature type="glycosylation site" description="N-linked (GlcNAc...) asparagine" evidence="2">
    <location>
        <position position="282"/>
    </location>
</feature>
<accession>P9WEV4</accession>
<organism>
    <name type="scientific">Aspergillus terreus</name>
    <dbReference type="NCBI Taxonomy" id="33178"/>
    <lineage>
        <taxon>Eukaryota</taxon>
        <taxon>Fungi</taxon>
        <taxon>Dikarya</taxon>
        <taxon>Ascomycota</taxon>
        <taxon>Pezizomycotina</taxon>
        <taxon>Eurotiomycetes</taxon>
        <taxon>Eurotiomycetidae</taxon>
        <taxon>Eurotiales</taxon>
        <taxon>Aspergillaceae</taxon>
        <taxon>Aspergillus</taxon>
        <taxon>Aspergillus subgen. Circumdati</taxon>
    </lineage>
</organism>
<proteinExistence type="inferred from homology"/>
<evidence type="ECO:0000255" key="1"/>
<evidence type="ECO:0000255" key="2">
    <source>
        <dbReference type="PROSITE-ProRule" id="PRU00498"/>
    </source>
</evidence>
<evidence type="ECO:0000269" key="3">
    <source>
    </source>
</evidence>
<evidence type="ECO:0000303" key="4">
    <source>
    </source>
</evidence>
<evidence type="ECO:0000305" key="5"/>
<evidence type="ECO:0000305" key="6">
    <source>
    </source>
</evidence>
<dbReference type="EC" id="2.3.1.-" evidence="6"/>
<dbReference type="EMBL" id="KX449366">
    <property type="protein sequence ID" value="AQM58280.1"/>
    <property type="molecule type" value="Genomic_DNA"/>
</dbReference>
<dbReference type="VEuPathDB" id="FungiDB:ATEG_03569"/>
<dbReference type="UniPathway" id="UPA00213"/>
<dbReference type="GO" id="GO:0016746">
    <property type="term" value="F:acyltransferase activity"/>
    <property type="evidence" value="ECO:0007669"/>
    <property type="project" value="UniProtKB-KW"/>
</dbReference>
<dbReference type="GO" id="GO:0016114">
    <property type="term" value="P:terpenoid biosynthetic process"/>
    <property type="evidence" value="ECO:0007669"/>
    <property type="project" value="UniProtKB-UniPathway"/>
</dbReference>